<accession>Q5UXM7</accession>
<evidence type="ECO:0000255" key="1">
    <source>
        <dbReference type="HAMAP-Rule" id="MF_02114"/>
    </source>
</evidence>
<feature type="chain" id="PRO_0000398725" description="2-phospho-L-lactate guanylyltransferase">
    <location>
        <begin position="1"/>
        <end position="208"/>
    </location>
</feature>
<comment type="function">
    <text evidence="1">Guanylyltransferase that catalyzes the activation of (2S)-2-phospholactate (2-PL) as (2S)-lactyl-2-diphospho-5'-guanosine, via the condensation of 2-PL with GTP. It is involved in the biosynthesis of coenzyme F420, a hydride carrier cofactor.</text>
</comment>
<comment type="catalytic activity">
    <reaction evidence="1">
        <text>(2S)-2-phospholactate + GTP + H(+) = (2S)-lactyl-2-diphospho-5'-guanosine + diphosphate</text>
        <dbReference type="Rhea" id="RHEA:63424"/>
        <dbReference type="ChEBI" id="CHEBI:15378"/>
        <dbReference type="ChEBI" id="CHEBI:33019"/>
        <dbReference type="ChEBI" id="CHEBI:37565"/>
        <dbReference type="ChEBI" id="CHEBI:59435"/>
        <dbReference type="ChEBI" id="CHEBI:59906"/>
        <dbReference type="EC" id="2.7.7.68"/>
    </reaction>
</comment>
<comment type="pathway">
    <text evidence="1">Cofactor biosynthesis; coenzyme F420 biosynthesis.</text>
</comment>
<comment type="subunit">
    <text evidence="1">Homodimer.</text>
</comment>
<comment type="similarity">
    <text evidence="1">Belongs to the CofC family.</text>
</comment>
<proteinExistence type="inferred from homology"/>
<protein>
    <recommendedName>
        <fullName evidence="1">2-phospho-L-lactate guanylyltransferase</fullName>
        <shortName evidence="1">LP guanylyltransferase</shortName>
        <ecNumber evidence="1">2.7.7.68</ecNumber>
    </recommendedName>
</protein>
<dbReference type="EC" id="2.7.7.68" evidence="1"/>
<dbReference type="EMBL" id="AY596297">
    <property type="protein sequence ID" value="AAV47976.1"/>
    <property type="molecule type" value="Genomic_DNA"/>
</dbReference>
<dbReference type="RefSeq" id="WP_011224716.1">
    <property type="nucleotide sequence ID" value="NZ_CP039138.1"/>
</dbReference>
<dbReference type="SMR" id="Q5UXM7"/>
<dbReference type="STRING" id="272569.rrnAC3282"/>
<dbReference type="PaxDb" id="272569-rrnAC3282"/>
<dbReference type="EnsemblBacteria" id="AAV47976">
    <property type="protein sequence ID" value="AAV47976"/>
    <property type="gene ID" value="rrnAC3282"/>
</dbReference>
<dbReference type="GeneID" id="40154078"/>
<dbReference type="KEGG" id="hma:rrnAC3282"/>
<dbReference type="PATRIC" id="fig|272569.17.peg.3813"/>
<dbReference type="eggNOG" id="arCOG04472">
    <property type="taxonomic scope" value="Archaea"/>
</dbReference>
<dbReference type="HOGENOM" id="CLU_076569_2_0_2"/>
<dbReference type="UniPathway" id="UPA00071"/>
<dbReference type="Proteomes" id="UP000001169">
    <property type="component" value="Chromosome I"/>
</dbReference>
<dbReference type="GO" id="GO:0005525">
    <property type="term" value="F:GTP binding"/>
    <property type="evidence" value="ECO:0007669"/>
    <property type="project" value="UniProtKB-KW"/>
</dbReference>
<dbReference type="GO" id="GO:0043814">
    <property type="term" value="F:phospholactate guanylyltransferase activity"/>
    <property type="evidence" value="ECO:0007669"/>
    <property type="project" value="UniProtKB-EC"/>
</dbReference>
<dbReference type="GO" id="GO:0052645">
    <property type="term" value="P:F420-0 metabolic process"/>
    <property type="evidence" value="ECO:0007669"/>
    <property type="project" value="UniProtKB-UniRule"/>
</dbReference>
<dbReference type="Gene3D" id="6.10.140.50">
    <property type="match status" value="1"/>
</dbReference>
<dbReference type="Gene3D" id="3.90.550.10">
    <property type="entry name" value="Spore Coat Polysaccharide Biosynthesis Protein SpsA, Chain A"/>
    <property type="match status" value="1"/>
</dbReference>
<dbReference type="HAMAP" id="MF_02114">
    <property type="entry name" value="CofC"/>
    <property type="match status" value="1"/>
</dbReference>
<dbReference type="InterPro" id="IPR002835">
    <property type="entry name" value="CofC"/>
</dbReference>
<dbReference type="InterPro" id="IPR029044">
    <property type="entry name" value="Nucleotide-diphossugar_trans"/>
</dbReference>
<dbReference type="NCBIfam" id="TIGR03552">
    <property type="entry name" value="F420_cofC"/>
    <property type="match status" value="1"/>
</dbReference>
<dbReference type="PANTHER" id="PTHR40392">
    <property type="entry name" value="2-PHOSPHO-L-LACTATE GUANYLYLTRANSFERASE"/>
    <property type="match status" value="1"/>
</dbReference>
<dbReference type="PANTHER" id="PTHR40392:SF1">
    <property type="entry name" value="2-PHOSPHO-L-LACTATE GUANYLYLTRANSFERASE"/>
    <property type="match status" value="1"/>
</dbReference>
<dbReference type="Pfam" id="PF01983">
    <property type="entry name" value="CofC"/>
    <property type="match status" value="1"/>
</dbReference>
<dbReference type="SUPFAM" id="SSF53448">
    <property type="entry name" value="Nucleotide-diphospho-sugar transferases"/>
    <property type="match status" value="1"/>
</dbReference>
<sequence>MRLAVPVSGSTPKTRLASVLSPDERRDFTEAMLADVVDAVTSAGHEPEVISTAPLDCAVPVTVDDRGLDPLVNDLLASTVTDDEGALAVVMADLPLVTRESIERLLAPEADVVLAPGLGGGTNAFVCRHPEFRVDYHGASIRDHRETARDVGASVTEVDSRRLATDIDEPDDLAEVLLHSDGAAADWLKQSGFELTATGGRVDVERFR</sequence>
<name>COFC_HALMA</name>
<gene>
    <name evidence="1" type="primary">cofC</name>
    <name type="ordered locus">rrnAC3282</name>
</gene>
<keyword id="KW-0342">GTP-binding</keyword>
<keyword id="KW-0547">Nucleotide-binding</keyword>
<keyword id="KW-0548">Nucleotidyltransferase</keyword>
<keyword id="KW-1185">Reference proteome</keyword>
<keyword id="KW-0808">Transferase</keyword>
<organism>
    <name type="scientific">Haloarcula marismortui (strain ATCC 43049 / DSM 3752 / JCM 8966 / VKM B-1809)</name>
    <name type="common">Halobacterium marismortui</name>
    <dbReference type="NCBI Taxonomy" id="272569"/>
    <lineage>
        <taxon>Archaea</taxon>
        <taxon>Methanobacteriati</taxon>
        <taxon>Methanobacteriota</taxon>
        <taxon>Stenosarchaea group</taxon>
        <taxon>Halobacteria</taxon>
        <taxon>Halobacteriales</taxon>
        <taxon>Haloarculaceae</taxon>
        <taxon>Haloarcula</taxon>
    </lineage>
</organism>
<reference key="1">
    <citation type="journal article" date="2004" name="Genome Res.">
        <title>Genome sequence of Haloarcula marismortui: a halophilic archaeon from the Dead Sea.</title>
        <authorList>
            <person name="Baliga N.S."/>
            <person name="Bonneau R."/>
            <person name="Facciotti M.T."/>
            <person name="Pan M."/>
            <person name="Glusman G."/>
            <person name="Deutsch E.W."/>
            <person name="Shannon P."/>
            <person name="Chiu Y."/>
            <person name="Weng R.S."/>
            <person name="Gan R.R."/>
            <person name="Hung P."/>
            <person name="Date S.V."/>
            <person name="Marcotte E."/>
            <person name="Hood L."/>
            <person name="Ng W.V."/>
        </authorList>
    </citation>
    <scope>NUCLEOTIDE SEQUENCE [LARGE SCALE GENOMIC DNA]</scope>
    <source>
        <strain>ATCC 43049 / DSM 3752 / JCM 8966 / VKM B-1809</strain>
    </source>
</reference>